<feature type="chain" id="PRO_1000205725" description="Large ribosomal subunit protein bL20">
    <location>
        <begin position="1"/>
        <end position="117"/>
    </location>
</feature>
<dbReference type="EMBL" id="CP001227">
    <property type="protein sequence ID" value="ACR47461.1"/>
    <property type="molecule type" value="Genomic_DNA"/>
</dbReference>
<dbReference type="RefSeq" id="WP_012736699.1">
    <property type="nucleotide sequence ID" value="NC_012730.1"/>
</dbReference>
<dbReference type="SMR" id="C4K1L0"/>
<dbReference type="KEGG" id="rpk:RPR_03625"/>
<dbReference type="HOGENOM" id="CLU_123265_0_1_5"/>
<dbReference type="Proteomes" id="UP000005015">
    <property type="component" value="Chromosome"/>
</dbReference>
<dbReference type="GO" id="GO:1990904">
    <property type="term" value="C:ribonucleoprotein complex"/>
    <property type="evidence" value="ECO:0007669"/>
    <property type="project" value="UniProtKB-KW"/>
</dbReference>
<dbReference type="GO" id="GO:0005840">
    <property type="term" value="C:ribosome"/>
    <property type="evidence" value="ECO:0007669"/>
    <property type="project" value="UniProtKB-KW"/>
</dbReference>
<dbReference type="GO" id="GO:0019843">
    <property type="term" value="F:rRNA binding"/>
    <property type="evidence" value="ECO:0007669"/>
    <property type="project" value="UniProtKB-UniRule"/>
</dbReference>
<dbReference type="GO" id="GO:0003735">
    <property type="term" value="F:structural constituent of ribosome"/>
    <property type="evidence" value="ECO:0007669"/>
    <property type="project" value="InterPro"/>
</dbReference>
<dbReference type="GO" id="GO:0000027">
    <property type="term" value="P:ribosomal large subunit assembly"/>
    <property type="evidence" value="ECO:0007669"/>
    <property type="project" value="UniProtKB-UniRule"/>
</dbReference>
<dbReference type="GO" id="GO:0006412">
    <property type="term" value="P:translation"/>
    <property type="evidence" value="ECO:0007669"/>
    <property type="project" value="InterPro"/>
</dbReference>
<dbReference type="CDD" id="cd07026">
    <property type="entry name" value="Ribosomal_L20"/>
    <property type="match status" value="1"/>
</dbReference>
<dbReference type="FunFam" id="1.10.1900.20:FF:000001">
    <property type="entry name" value="50S ribosomal protein L20"/>
    <property type="match status" value="1"/>
</dbReference>
<dbReference type="Gene3D" id="6.10.160.10">
    <property type="match status" value="1"/>
</dbReference>
<dbReference type="Gene3D" id="1.10.1900.20">
    <property type="entry name" value="Ribosomal protein L20"/>
    <property type="match status" value="1"/>
</dbReference>
<dbReference type="HAMAP" id="MF_00382">
    <property type="entry name" value="Ribosomal_bL20"/>
    <property type="match status" value="1"/>
</dbReference>
<dbReference type="InterPro" id="IPR005813">
    <property type="entry name" value="Ribosomal_bL20"/>
</dbReference>
<dbReference type="InterPro" id="IPR049946">
    <property type="entry name" value="RIBOSOMAL_L20_CS"/>
</dbReference>
<dbReference type="InterPro" id="IPR035566">
    <property type="entry name" value="Ribosomal_protein_bL20_C"/>
</dbReference>
<dbReference type="NCBIfam" id="TIGR01032">
    <property type="entry name" value="rplT_bact"/>
    <property type="match status" value="1"/>
</dbReference>
<dbReference type="PANTHER" id="PTHR10986">
    <property type="entry name" value="39S RIBOSOMAL PROTEIN L20"/>
    <property type="match status" value="1"/>
</dbReference>
<dbReference type="Pfam" id="PF00453">
    <property type="entry name" value="Ribosomal_L20"/>
    <property type="match status" value="1"/>
</dbReference>
<dbReference type="PRINTS" id="PR00062">
    <property type="entry name" value="RIBOSOMALL20"/>
</dbReference>
<dbReference type="SUPFAM" id="SSF74731">
    <property type="entry name" value="Ribosomal protein L20"/>
    <property type="match status" value="1"/>
</dbReference>
<dbReference type="PROSITE" id="PS00937">
    <property type="entry name" value="RIBOSOMAL_L20"/>
    <property type="match status" value="1"/>
</dbReference>
<accession>C4K1L0</accession>
<sequence length="117" mass="13550">MTRAKSGKISKNRHKKILKFAKGYRGRANSCFRVAIEKVEKALQYAYRDRRNRKRDFRGLWIQRINAAVREHGLVYSQFMGALKKTEIDIDRKVLAELAVNNSDGFVSIVEKAKAHI</sequence>
<keyword id="KW-0687">Ribonucleoprotein</keyword>
<keyword id="KW-0689">Ribosomal protein</keyword>
<keyword id="KW-0694">RNA-binding</keyword>
<keyword id="KW-0699">rRNA-binding</keyword>
<protein>
    <recommendedName>
        <fullName evidence="1">Large ribosomal subunit protein bL20</fullName>
    </recommendedName>
    <alternativeName>
        <fullName evidence="2">50S ribosomal protein L20</fullName>
    </alternativeName>
</protein>
<evidence type="ECO:0000255" key="1">
    <source>
        <dbReference type="HAMAP-Rule" id="MF_00382"/>
    </source>
</evidence>
<evidence type="ECO:0000305" key="2"/>
<name>RL20_RICPU</name>
<comment type="function">
    <text evidence="1">Binds directly to 23S ribosomal RNA and is necessary for the in vitro assembly process of the 50S ribosomal subunit. It is not involved in the protein synthesizing functions of that subunit.</text>
</comment>
<comment type="similarity">
    <text evidence="1">Belongs to the bacterial ribosomal protein bL20 family.</text>
</comment>
<organism>
    <name type="scientific">Rickettsia peacockii (strain Rustic)</name>
    <dbReference type="NCBI Taxonomy" id="562019"/>
    <lineage>
        <taxon>Bacteria</taxon>
        <taxon>Pseudomonadati</taxon>
        <taxon>Pseudomonadota</taxon>
        <taxon>Alphaproteobacteria</taxon>
        <taxon>Rickettsiales</taxon>
        <taxon>Rickettsiaceae</taxon>
        <taxon>Rickettsieae</taxon>
        <taxon>Rickettsia</taxon>
        <taxon>spotted fever group</taxon>
    </lineage>
</organism>
<proteinExistence type="inferred from homology"/>
<gene>
    <name evidence="1" type="primary">rplT</name>
    <name type="ordered locus">RPR_03625</name>
</gene>
<reference key="1">
    <citation type="journal article" date="2009" name="PLoS ONE">
        <title>Genome sequence of the endosymbiont Rickettsia peacockii and comparison with virulent Rickettsia rickettsii: identification of virulence factors.</title>
        <authorList>
            <person name="Felsheim R.F."/>
            <person name="Kurtti T.J."/>
            <person name="Munderloh U.G."/>
        </authorList>
    </citation>
    <scope>NUCLEOTIDE SEQUENCE [LARGE SCALE GENOMIC DNA]</scope>
    <source>
        <strain>Rustic</strain>
    </source>
</reference>